<evidence type="ECO:0000255" key="1">
    <source>
        <dbReference type="HAMAP-Rule" id="MF_00694"/>
    </source>
</evidence>
<dbReference type="EC" id="4.2.1.41" evidence="1"/>
<dbReference type="EMBL" id="BA000028">
    <property type="protein sequence ID" value="BAC14797.1"/>
    <property type="molecule type" value="Genomic_DNA"/>
</dbReference>
<dbReference type="RefSeq" id="WP_011067238.1">
    <property type="nucleotide sequence ID" value="NC_004193.1"/>
</dbReference>
<dbReference type="SMR" id="Q8EMK1"/>
<dbReference type="STRING" id="221109.gene:10735093"/>
<dbReference type="KEGG" id="oih:OB2841"/>
<dbReference type="eggNOG" id="COG0329">
    <property type="taxonomic scope" value="Bacteria"/>
</dbReference>
<dbReference type="HOGENOM" id="CLU_049343_5_2_9"/>
<dbReference type="OrthoDB" id="9778880at2"/>
<dbReference type="PhylomeDB" id="Q8EMK1"/>
<dbReference type="UniPathway" id="UPA00564">
    <property type="reaction ID" value="UER00628"/>
</dbReference>
<dbReference type="Proteomes" id="UP000000822">
    <property type="component" value="Chromosome"/>
</dbReference>
<dbReference type="GO" id="GO:0008840">
    <property type="term" value="F:4-hydroxy-tetrahydrodipicolinate synthase activity"/>
    <property type="evidence" value="ECO:0007669"/>
    <property type="project" value="TreeGrafter"/>
</dbReference>
<dbReference type="GO" id="GO:0047448">
    <property type="term" value="F:5-dehydro-4-deoxyglucarate dehydratase activity"/>
    <property type="evidence" value="ECO:0007669"/>
    <property type="project" value="UniProtKB-UniRule"/>
</dbReference>
<dbReference type="GO" id="GO:0042838">
    <property type="term" value="P:D-glucarate catabolic process"/>
    <property type="evidence" value="ECO:0007669"/>
    <property type="project" value="UniProtKB-UniRule"/>
</dbReference>
<dbReference type="Gene3D" id="3.20.20.70">
    <property type="entry name" value="Aldolase class I"/>
    <property type="match status" value="1"/>
</dbReference>
<dbReference type="HAMAP" id="MF_00694">
    <property type="entry name" value="KDGDH"/>
    <property type="match status" value="1"/>
</dbReference>
<dbReference type="InterPro" id="IPR013785">
    <property type="entry name" value="Aldolase_TIM"/>
</dbReference>
<dbReference type="InterPro" id="IPR002220">
    <property type="entry name" value="DapA-like"/>
</dbReference>
<dbReference type="InterPro" id="IPR017655">
    <property type="entry name" value="Dehydro-deoxyglucarate_dehyd"/>
</dbReference>
<dbReference type="NCBIfam" id="TIGR03249">
    <property type="entry name" value="KdgD"/>
    <property type="match status" value="1"/>
</dbReference>
<dbReference type="NCBIfam" id="NF002958">
    <property type="entry name" value="PRK03620.1"/>
    <property type="match status" value="1"/>
</dbReference>
<dbReference type="PANTHER" id="PTHR12128:SF19">
    <property type="entry name" value="5-DEHYDRO-4-DEOXYGLUCARATE DEHYDRATASE 2-RELATED"/>
    <property type="match status" value="1"/>
</dbReference>
<dbReference type="PANTHER" id="PTHR12128">
    <property type="entry name" value="DIHYDRODIPICOLINATE SYNTHASE"/>
    <property type="match status" value="1"/>
</dbReference>
<dbReference type="Pfam" id="PF00701">
    <property type="entry name" value="DHDPS"/>
    <property type="match status" value="1"/>
</dbReference>
<dbReference type="PIRSF" id="PIRSF001365">
    <property type="entry name" value="DHDPS"/>
    <property type="match status" value="1"/>
</dbReference>
<dbReference type="SMART" id="SM01130">
    <property type="entry name" value="DHDPS"/>
    <property type="match status" value="1"/>
</dbReference>
<dbReference type="SUPFAM" id="SSF51569">
    <property type="entry name" value="Aldolase"/>
    <property type="match status" value="1"/>
</dbReference>
<accession>Q8EMK1</accession>
<name>KDGD_OCEIH</name>
<proteinExistence type="inferred from homology"/>
<comment type="catalytic activity">
    <reaction evidence="1">
        <text>5-dehydro-4-deoxy-D-glucarate + H(+) = 2,5-dioxopentanoate + CO2 + H2O</text>
        <dbReference type="Rhea" id="RHEA:24608"/>
        <dbReference type="ChEBI" id="CHEBI:15377"/>
        <dbReference type="ChEBI" id="CHEBI:15378"/>
        <dbReference type="ChEBI" id="CHEBI:16526"/>
        <dbReference type="ChEBI" id="CHEBI:42819"/>
        <dbReference type="ChEBI" id="CHEBI:58136"/>
        <dbReference type="EC" id="4.2.1.41"/>
    </reaction>
</comment>
<comment type="pathway">
    <text evidence="1">Carbohydrate acid metabolism; D-glucarate degradation; 2,5-dioxopentanoate from D-glucarate: step 2/2.</text>
</comment>
<comment type="similarity">
    <text evidence="1">Belongs to the DapA family.</text>
</comment>
<protein>
    <recommendedName>
        <fullName evidence="1">Probable 5-dehydro-4-deoxyglucarate dehydratase</fullName>
        <ecNumber evidence="1">4.2.1.41</ecNumber>
    </recommendedName>
    <alternativeName>
        <fullName evidence="1">5-keto-4-deoxy-glucarate dehydratase</fullName>
        <shortName evidence="1">KDGDH</shortName>
    </alternativeName>
</protein>
<keyword id="KW-0456">Lyase</keyword>
<keyword id="KW-1185">Reference proteome</keyword>
<organism>
    <name type="scientific">Oceanobacillus iheyensis (strain DSM 14371 / CIP 107618 / JCM 11309 / KCTC 3954 / HTE831)</name>
    <dbReference type="NCBI Taxonomy" id="221109"/>
    <lineage>
        <taxon>Bacteria</taxon>
        <taxon>Bacillati</taxon>
        <taxon>Bacillota</taxon>
        <taxon>Bacilli</taxon>
        <taxon>Bacillales</taxon>
        <taxon>Bacillaceae</taxon>
        <taxon>Oceanobacillus</taxon>
    </lineage>
</organism>
<reference key="1">
    <citation type="journal article" date="2002" name="Nucleic Acids Res.">
        <title>Genome sequence of Oceanobacillus iheyensis isolated from the Iheya Ridge and its unexpected adaptive capabilities to extreme environments.</title>
        <authorList>
            <person name="Takami H."/>
            <person name="Takaki Y."/>
            <person name="Uchiyama I."/>
        </authorList>
    </citation>
    <scope>NUCLEOTIDE SEQUENCE [LARGE SCALE GENOMIC DNA]</scope>
    <source>
        <strain>DSM 14371 / CIP 107618 / JCM 11309 / KCTC 3954 / HTE831</strain>
    </source>
</reference>
<sequence>MNRKAPTGILGFPVTPFDNQGNIDELALSQNIKYLLDSGLEAIFVACGAGEYHSLENGEYESIIEIATSTVKGQVPVYTGVGGNLSDAVHKAKLSEKHGVDGYLIMPAYLINGEQEGIYQYVHSIATSTDLNAIVYQRDNVVMNLDTIEKLVEIPQIVGFKDGHGSMEHIIEFTQSIGNKIGWLNGMPMAEVTMPAYIPLGFDSYSSAISNYIPHISRKFYDALLEGDETTVNEIYQEVILPINRIRRQGKGYAISLIKAGMEIVGLPINSNNVRPPVTPVKKEHYEQLEEILKKALIKYPSNLTKSL</sequence>
<feature type="chain" id="PRO_0000103233" description="Probable 5-dehydro-4-deoxyglucarate dehydratase">
    <location>
        <begin position="1"/>
        <end position="308"/>
    </location>
</feature>
<gene>
    <name type="ordered locus">OB2841</name>
</gene>